<name>YGAM_ECOL6</name>
<reference key="1">
    <citation type="journal article" date="2002" name="Proc. Natl. Acad. Sci. U.S.A.">
        <title>Extensive mosaic structure revealed by the complete genome sequence of uropathogenic Escherichia coli.</title>
        <authorList>
            <person name="Welch R.A."/>
            <person name="Burland V."/>
            <person name="Plunkett G. III"/>
            <person name="Redford P."/>
            <person name="Roesch P."/>
            <person name="Rasko D."/>
            <person name="Buckles E.L."/>
            <person name="Liou S.-R."/>
            <person name="Boutin A."/>
            <person name="Hackett J."/>
            <person name="Stroud D."/>
            <person name="Mayhew G.F."/>
            <person name="Rose D.J."/>
            <person name="Zhou S."/>
            <person name="Schwartz D.C."/>
            <person name="Perna N.T."/>
            <person name="Mobley H.L.T."/>
            <person name="Donnenberg M.S."/>
            <person name="Blattner F.R."/>
        </authorList>
    </citation>
    <scope>NUCLEOTIDE SEQUENCE [LARGE SCALE GENOMIC DNA]</scope>
    <source>
        <strain>CFT073 / ATCC 700928 / UPEC</strain>
    </source>
</reference>
<gene>
    <name type="primary">ygaM</name>
    <name type="ordered locus">c3223</name>
</gene>
<proteinExistence type="inferred from homology"/>
<comment type="subunit">
    <text evidence="1">May bind to ribosomes.</text>
</comment>
<comment type="subcellular location">
    <subcellularLocation>
        <location evidence="3">Cell inner membrane</location>
        <topology evidence="3">Single-pass membrane protein</topology>
    </subcellularLocation>
</comment>
<comment type="similarity">
    <text evidence="3">Belongs to the ElaB/YgaM/YqjD family.</text>
</comment>
<comment type="sequence caution" evidence="3">
    <conflict type="erroneous initiation">
        <sequence resource="EMBL-CDS" id="AAN81675"/>
    </conflict>
    <text>Extended N-terminus.</text>
</comment>
<evidence type="ECO:0000250" key="1"/>
<evidence type="ECO:0000255" key="2"/>
<evidence type="ECO:0000305" key="3"/>
<keyword id="KW-0997">Cell inner membrane</keyword>
<keyword id="KW-1003">Cell membrane</keyword>
<keyword id="KW-0472">Membrane</keyword>
<keyword id="KW-1185">Reference proteome</keyword>
<keyword id="KW-0812">Transmembrane</keyword>
<keyword id="KW-1133">Transmembrane helix</keyword>
<protein>
    <recommendedName>
        <fullName>Uncharacterized protein YgaM</fullName>
    </recommendedName>
</protein>
<accession>P0ADQ8</accession>
<accession>P77800</accession>
<accession>Q47413</accession>
<dbReference type="EMBL" id="AE014075">
    <property type="protein sequence ID" value="AAN81675.1"/>
    <property type="status" value="ALT_INIT"/>
    <property type="molecule type" value="Genomic_DNA"/>
</dbReference>
<dbReference type="RefSeq" id="WP_001295174.1">
    <property type="nucleotide sequence ID" value="NZ_CP051263.1"/>
</dbReference>
<dbReference type="SMR" id="P0ADQ8"/>
<dbReference type="STRING" id="199310.c3223"/>
<dbReference type="KEGG" id="ecc:c3223"/>
<dbReference type="eggNOG" id="COG4575">
    <property type="taxonomic scope" value="Bacteria"/>
</dbReference>
<dbReference type="HOGENOM" id="CLU_132623_4_1_6"/>
<dbReference type="Proteomes" id="UP000001410">
    <property type="component" value="Chromosome"/>
</dbReference>
<dbReference type="GO" id="GO:0005886">
    <property type="term" value="C:plasma membrane"/>
    <property type="evidence" value="ECO:0007669"/>
    <property type="project" value="UniProtKB-SubCell"/>
</dbReference>
<dbReference type="GO" id="GO:0043022">
    <property type="term" value="F:ribosome binding"/>
    <property type="evidence" value="ECO:0007669"/>
    <property type="project" value="InterPro"/>
</dbReference>
<dbReference type="InterPro" id="IPR043605">
    <property type="entry name" value="DUF883_C"/>
</dbReference>
<dbReference type="InterPro" id="IPR043604">
    <property type="entry name" value="DUF883_N"/>
</dbReference>
<dbReference type="InterPro" id="IPR010279">
    <property type="entry name" value="YqjD/ElaB"/>
</dbReference>
<dbReference type="NCBIfam" id="NF007523">
    <property type="entry name" value="PRK10132.1"/>
    <property type="match status" value="1"/>
</dbReference>
<dbReference type="PANTHER" id="PTHR35893:SF4">
    <property type="entry name" value="INNER MEMBRANE PROTEIN"/>
    <property type="match status" value="1"/>
</dbReference>
<dbReference type="PANTHER" id="PTHR35893">
    <property type="entry name" value="INNER MEMBRANE PROTEIN-RELATED"/>
    <property type="match status" value="1"/>
</dbReference>
<dbReference type="Pfam" id="PF05957">
    <property type="entry name" value="DUF883"/>
    <property type="match status" value="1"/>
</dbReference>
<dbReference type="Pfam" id="PF19029">
    <property type="entry name" value="DUF883_C"/>
    <property type="match status" value="1"/>
</dbReference>
<sequence length="109" mass="11847">MFNRPNRNDVDDGVQDIQNDVNQLADSLESVLKSWGSDAKGEAEAARSKAQALLKETRARMHGRTRVQQAARDAVGCADSFVRERPWCSVGTAAAVGIFIGALLSMRKS</sequence>
<organism>
    <name type="scientific">Escherichia coli O6:H1 (strain CFT073 / ATCC 700928 / UPEC)</name>
    <dbReference type="NCBI Taxonomy" id="199310"/>
    <lineage>
        <taxon>Bacteria</taxon>
        <taxon>Pseudomonadati</taxon>
        <taxon>Pseudomonadota</taxon>
        <taxon>Gammaproteobacteria</taxon>
        <taxon>Enterobacterales</taxon>
        <taxon>Enterobacteriaceae</taxon>
        <taxon>Escherichia</taxon>
    </lineage>
</organism>
<feature type="chain" id="PRO_0000169299" description="Uncharacterized protein YgaM">
    <location>
        <begin position="1"/>
        <end position="109"/>
    </location>
</feature>
<feature type="transmembrane region" description="Helical" evidence="2">
    <location>
        <begin position="87"/>
        <end position="106"/>
    </location>
</feature>